<sequence>MLGWVVTFLVIALIAGILGFGGVAGASIEIAKIIFFIAIVLFLVSAVVGLARGRTRV</sequence>
<proteinExistence type="inferred from homology"/>
<evidence type="ECO:0000255" key="1">
    <source>
        <dbReference type="HAMAP-Rule" id="MF_01361"/>
    </source>
</evidence>
<protein>
    <recommendedName>
        <fullName evidence="1">UPF0391 membrane protein BRADO5617</fullName>
    </recommendedName>
</protein>
<keyword id="KW-1003">Cell membrane</keyword>
<keyword id="KW-0472">Membrane</keyword>
<keyword id="KW-1185">Reference proteome</keyword>
<keyword id="KW-0812">Transmembrane</keyword>
<keyword id="KW-1133">Transmembrane helix</keyword>
<feature type="chain" id="PRO_0000298592" description="UPF0391 membrane protein BRADO5617">
    <location>
        <begin position="1"/>
        <end position="57"/>
    </location>
</feature>
<feature type="transmembrane region" description="Helical" evidence="1">
    <location>
        <begin position="1"/>
        <end position="21"/>
    </location>
</feature>
<feature type="transmembrane region" description="Helical" evidence="1">
    <location>
        <begin position="30"/>
        <end position="50"/>
    </location>
</feature>
<dbReference type="EMBL" id="CU234118">
    <property type="protein sequence ID" value="CAL79289.1"/>
    <property type="molecule type" value="Genomic_DNA"/>
</dbReference>
<dbReference type="STRING" id="114615.BRADO5617"/>
<dbReference type="KEGG" id="bra:BRADO5617"/>
<dbReference type="eggNOG" id="COG5487">
    <property type="taxonomic scope" value="Bacteria"/>
</dbReference>
<dbReference type="HOGENOM" id="CLU_187346_2_1_5"/>
<dbReference type="Proteomes" id="UP000001994">
    <property type="component" value="Chromosome"/>
</dbReference>
<dbReference type="GO" id="GO:0005886">
    <property type="term" value="C:plasma membrane"/>
    <property type="evidence" value="ECO:0007669"/>
    <property type="project" value="UniProtKB-SubCell"/>
</dbReference>
<dbReference type="HAMAP" id="MF_01361">
    <property type="entry name" value="UPF0391"/>
    <property type="match status" value="1"/>
</dbReference>
<dbReference type="InterPro" id="IPR009760">
    <property type="entry name" value="DUF1328"/>
</dbReference>
<dbReference type="NCBIfam" id="NF010228">
    <property type="entry name" value="PRK13682.1-3"/>
    <property type="match status" value="1"/>
</dbReference>
<dbReference type="NCBIfam" id="NF010229">
    <property type="entry name" value="PRK13682.1-4"/>
    <property type="match status" value="1"/>
</dbReference>
<dbReference type="Pfam" id="PF07043">
    <property type="entry name" value="DUF1328"/>
    <property type="match status" value="1"/>
</dbReference>
<dbReference type="PIRSF" id="PIRSF036466">
    <property type="entry name" value="UCP036466"/>
    <property type="match status" value="1"/>
</dbReference>
<name>Y5617_BRASO</name>
<accession>A4YZG3</accession>
<organism>
    <name type="scientific">Bradyrhizobium sp. (strain ORS 278)</name>
    <dbReference type="NCBI Taxonomy" id="114615"/>
    <lineage>
        <taxon>Bacteria</taxon>
        <taxon>Pseudomonadati</taxon>
        <taxon>Pseudomonadota</taxon>
        <taxon>Alphaproteobacteria</taxon>
        <taxon>Hyphomicrobiales</taxon>
        <taxon>Nitrobacteraceae</taxon>
        <taxon>Bradyrhizobium</taxon>
    </lineage>
</organism>
<reference key="1">
    <citation type="journal article" date="2007" name="Science">
        <title>Legumes symbioses: absence of nod genes in photosynthetic bradyrhizobia.</title>
        <authorList>
            <person name="Giraud E."/>
            <person name="Moulin L."/>
            <person name="Vallenet D."/>
            <person name="Barbe V."/>
            <person name="Cytryn E."/>
            <person name="Avarre J.-C."/>
            <person name="Jaubert M."/>
            <person name="Simon D."/>
            <person name="Cartieaux F."/>
            <person name="Prin Y."/>
            <person name="Bena G."/>
            <person name="Hannibal L."/>
            <person name="Fardoux J."/>
            <person name="Kojadinovic M."/>
            <person name="Vuillet L."/>
            <person name="Lajus A."/>
            <person name="Cruveiller S."/>
            <person name="Rouy Z."/>
            <person name="Mangenot S."/>
            <person name="Segurens B."/>
            <person name="Dossat C."/>
            <person name="Franck W.L."/>
            <person name="Chang W.-S."/>
            <person name="Saunders E."/>
            <person name="Bruce D."/>
            <person name="Richardson P."/>
            <person name="Normand P."/>
            <person name="Dreyfus B."/>
            <person name="Pignol D."/>
            <person name="Stacey G."/>
            <person name="Emerich D."/>
            <person name="Vermeglio A."/>
            <person name="Medigue C."/>
            <person name="Sadowsky M."/>
        </authorList>
    </citation>
    <scope>NUCLEOTIDE SEQUENCE [LARGE SCALE GENOMIC DNA]</scope>
    <source>
        <strain>ORS 278</strain>
    </source>
</reference>
<comment type="subcellular location">
    <subcellularLocation>
        <location evidence="1">Cell membrane</location>
        <topology evidence="1">Multi-pass membrane protein</topology>
    </subcellularLocation>
</comment>
<comment type="similarity">
    <text evidence="1">Belongs to the UPF0391 family.</text>
</comment>
<gene>
    <name type="ordered locus">BRADO5617</name>
</gene>